<keyword id="KW-0997">Cell inner membrane</keyword>
<keyword id="KW-1003">Cell membrane</keyword>
<keyword id="KW-0378">Hydrolase</keyword>
<keyword id="KW-0444">Lipid biosynthesis</keyword>
<keyword id="KW-0443">Lipid metabolism</keyword>
<keyword id="KW-0472">Membrane</keyword>
<keyword id="KW-0594">Phospholipid biosynthesis</keyword>
<keyword id="KW-1208">Phospholipid metabolism</keyword>
<keyword id="KW-1185">Reference proteome</keyword>
<keyword id="KW-0812">Transmembrane</keyword>
<keyword id="KW-1133">Transmembrane helix</keyword>
<organism>
    <name type="scientific">Yersinia pestis</name>
    <dbReference type="NCBI Taxonomy" id="632"/>
    <lineage>
        <taxon>Bacteria</taxon>
        <taxon>Pseudomonadati</taxon>
        <taxon>Pseudomonadota</taxon>
        <taxon>Gammaproteobacteria</taxon>
        <taxon>Enterobacterales</taxon>
        <taxon>Yersiniaceae</taxon>
        <taxon>Yersinia</taxon>
    </lineage>
</organism>
<evidence type="ECO:0000250" key="1"/>
<evidence type="ECO:0000255" key="2"/>
<evidence type="ECO:0000305" key="3"/>
<proteinExistence type="inferred from homology"/>
<dbReference type="EC" id="3.6.1.26"/>
<dbReference type="EMBL" id="AL590842">
    <property type="protein sequence ID" value="CAL22566.1"/>
    <property type="molecule type" value="Genomic_DNA"/>
</dbReference>
<dbReference type="EMBL" id="AE009952">
    <property type="protein sequence ID" value="AAM87388.1"/>
    <property type="status" value="ALT_INIT"/>
    <property type="molecule type" value="Genomic_DNA"/>
</dbReference>
<dbReference type="EMBL" id="AE017042">
    <property type="protein sequence ID" value="AAS63514.1"/>
    <property type="status" value="ALT_INIT"/>
    <property type="molecule type" value="Genomic_DNA"/>
</dbReference>
<dbReference type="PIR" id="AC0485">
    <property type="entry name" value="AC0485"/>
</dbReference>
<dbReference type="RefSeq" id="YP_002348856.1">
    <property type="nucleotide sequence ID" value="NC_003143.1"/>
</dbReference>
<dbReference type="SMR" id="Q8ZA34"/>
<dbReference type="IntAct" id="Q8ZA34">
    <property type="interactions" value="1"/>
</dbReference>
<dbReference type="STRING" id="214092.YPO3986"/>
<dbReference type="PaxDb" id="214092-YPO3986"/>
<dbReference type="DNASU" id="1148790"/>
<dbReference type="EnsemblBacteria" id="AAS63514">
    <property type="protein sequence ID" value="AAS63514"/>
    <property type="gene ID" value="YP_3349"/>
</dbReference>
<dbReference type="KEGG" id="ype:YPO3986"/>
<dbReference type="KEGG" id="ypk:y3843"/>
<dbReference type="KEGG" id="ypm:YP_3349"/>
<dbReference type="PATRIC" id="fig|214092.21.peg.4519"/>
<dbReference type="eggNOG" id="COG2134">
    <property type="taxonomic scope" value="Bacteria"/>
</dbReference>
<dbReference type="HOGENOM" id="CLU_077117_0_1_6"/>
<dbReference type="UniPathway" id="UPA00609">
    <property type="reaction ID" value="UER00664"/>
</dbReference>
<dbReference type="Proteomes" id="UP000000815">
    <property type="component" value="Chromosome"/>
</dbReference>
<dbReference type="Proteomes" id="UP000001019">
    <property type="component" value="Chromosome"/>
</dbReference>
<dbReference type="Proteomes" id="UP000002490">
    <property type="component" value="Chromosome"/>
</dbReference>
<dbReference type="GO" id="GO:0005886">
    <property type="term" value="C:plasma membrane"/>
    <property type="evidence" value="ECO:0007669"/>
    <property type="project" value="UniProtKB-SubCell"/>
</dbReference>
<dbReference type="GO" id="GO:0008715">
    <property type="term" value="F:CDP-diacylglycerol diphosphatase activity"/>
    <property type="evidence" value="ECO:0007669"/>
    <property type="project" value="UniProtKB-UniRule"/>
</dbReference>
<dbReference type="GO" id="GO:0046342">
    <property type="term" value="P:CDP-diacylglycerol catabolic process"/>
    <property type="evidence" value="ECO:0007669"/>
    <property type="project" value="UniProtKB-UniRule"/>
</dbReference>
<dbReference type="GO" id="GO:0008654">
    <property type="term" value="P:phospholipid biosynthetic process"/>
    <property type="evidence" value="ECO:0007669"/>
    <property type="project" value="UniProtKB-KW"/>
</dbReference>
<dbReference type="Gene3D" id="3.30.428.30">
    <property type="entry name" value="HIT family - CDH-like"/>
    <property type="match status" value="1"/>
</dbReference>
<dbReference type="HAMAP" id="MF_00319">
    <property type="entry name" value="Cdh"/>
    <property type="match status" value="1"/>
</dbReference>
<dbReference type="InterPro" id="IPR003763">
    <property type="entry name" value="CDP-diacylglyc_Pase"/>
</dbReference>
<dbReference type="InterPro" id="IPR036265">
    <property type="entry name" value="HIT-like_sf"/>
</dbReference>
<dbReference type="NCBIfam" id="NF003984">
    <property type="entry name" value="PRK05471.1-3"/>
    <property type="match status" value="1"/>
</dbReference>
<dbReference type="NCBIfam" id="NF003986">
    <property type="entry name" value="PRK05471.1-5"/>
    <property type="match status" value="1"/>
</dbReference>
<dbReference type="Pfam" id="PF02611">
    <property type="entry name" value="CDH"/>
    <property type="match status" value="1"/>
</dbReference>
<dbReference type="PIRSF" id="PIRSF001273">
    <property type="entry name" value="CDH"/>
    <property type="match status" value="1"/>
</dbReference>
<dbReference type="SUPFAM" id="SSF54197">
    <property type="entry name" value="HIT-like"/>
    <property type="match status" value="1"/>
</dbReference>
<name>CDH_YERPE</name>
<protein>
    <recommendedName>
        <fullName>CDP-diacylglycerol pyrophosphatase</fullName>
        <ecNumber>3.6.1.26</ecNumber>
    </recommendedName>
    <alternativeName>
        <fullName>CDP-diacylglycerol phosphatidylhydrolase</fullName>
    </alternativeName>
    <alternativeName>
        <fullName>CDP-diglyceride hydrolase</fullName>
    </alternativeName>
</protein>
<sequence length="258" mass="28779">MSRSIKWRRYLLTLLILIILAAGLIYKLRFSNADALWKIISQQCIPHMTTEDDPRPCAEVNIPAGFAVLKDRNGPLQYLLIPTVPISGIESPQLLTATSPNYFADAWQARYFMAEKYGAPIDDTDISLAINSQYGRTQDQLHIHISCLKPQVKTALAAHSADFQQQWQPLPGGLLGHDYWVRRITATELQQPGPFHLLADEMPGAKEQMGRYGLAITALPSGDFLLLANKASLITQDRASAEELQDHTCQVLPHLPVQ</sequence>
<reference key="1">
    <citation type="journal article" date="2001" name="Nature">
        <title>Genome sequence of Yersinia pestis, the causative agent of plague.</title>
        <authorList>
            <person name="Parkhill J."/>
            <person name="Wren B.W."/>
            <person name="Thomson N.R."/>
            <person name="Titball R.W."/>
            <person name="Holden M.T.G."/>
            <person name="Prentice M.B."/>
            <person name="Sebaihia M."/>
            <person name="James K.D."/>
            <person name="Churcher C.M."/>
            <person name="Mungall K.L."/>
            <person name="Baker S."/>
            <person name="Basham D."/>
            <person name="Bentley S.D."/>
            <person name="Brooks K."/>
            <person name="Cerdeno-Tarraga A.-M."/>
            <person name="Chillingworth T."/>
            <person name="Cronin A."/>
            <person name="Davies R.M."/>
            <person name="Davis P."/>
            <person name="Dougan G."/>
            <person name="Feltwell T."/>
            <person name="Hamlin N."/>
            <person name="Holroyd S."/>
            <person name="Jagels K."/>
            <person name="Karlyshev A.V."/>
            <person name="Leather S."/>
            <person name="Moule S."/>
            <person name="Oyston P.C.F."/>
            <person name="Quail M.A."/>
            <person name="Rutherford K.M."/>
            <person name="Simmonds M."/>
            <person name="Skelton J."/>
            <person name="Stevens K."/>
            <person name="Whitehead S."/>
            <person name="Barrell B.G."/>
        </authorList>
    </citation>
    <scope>NUCLEOTIDE SEQUENCE [LARGE SCALE GENOMIC DNA]</scope>
    <source>
        <strain>CO-92 / Biovar Orientalis</strain>
    </source>
</reference>
<reference key="2">
    <citation type="journal article" date="2002" name="J. Bacteriol.">
        <title>Genome sequence of Yersinia pestis KIM.</title>
        <authorList>
            <person name="Deng W."/>
            <person name="Burland V."/>
            <person name="Plunkett G. III"/>
            <person name="Boutin A."/>
            <person name="Mayhew G.F."/>
            <person name="Liss P."/>
            <person name="Perna N.T."/>
            <person name="Rose D.J."/>
            <person name="Mau B."/>
            <person name="Zhou S."/>
            <person name="Schwartz D.C."/>
            <person name="Fetherston J.D."/>
            <person name="Lindler L.E."/>
            <person name="Brubaker R.R."/>
            <person name="Plano G.V."/>
            <person name="Straley S.C."/>
            <person name="McDonough K.A."/>
            <person name="Nilles M.L."/>
            <person name="Matson J.S."/>
            <person name="Blattner F.R."/>
            <person name="Perry R.D."/>
        </authorList>
    </citation>
    <scope>NUCLEOTIDE SEQUENCE [LARGE SCALE GENOMIC DNA]</scope>
    <source>
        <strain>KIM10+ / Biovar Mediaevalis</strain>
    </source>
</reference>
<reference key="3">
    <citation type="journal article" date="2004" name="DNA Res.">
        <title>Complete genome sequence of Yersinia pestis strain 91001, an isolate avirulent to humans.</title>
        <authorList>
            <person name="Song Y."/>
            <person name="Tong Z."/>
            <person name="Wang J."/>
            <person name="Wang L."/>
            <person name="Guo Z."/>
            <person name="Han Y."/>
            <person name="Zhang J."/>
            <person name="Pei D."/>
            <person name="Zhou D."/>
            <person name="Qin H."/>
            <person name="Pang X."/>
            <person name="Han Y."/>
            <person name="Zhai J."/>
            <person name="Li M."/>
            <person name="Cui B."/>
            <person name="Qi Z."/>
            <person name="Jin L."/>
            <person name="Dai R."/>
            <person name="Chen F."/>
            <person name="Li S."/>
            <person name="Ye C."/>
            <person name="Du Z."/>
            <person name="Lin W."/>
            <person name="Wang J."/>
            <person name="Yu J."/>
            <person name="Yang H."/>
            <person name="Wang J."/>
            <person name="Huang P."/>
            <person name="Yang R."/>
        </authorList>
    </citation>
    <scope>NUCLEOTIDE SEQUENCE [LARGE SCALE GENOMIC DNA]</scope>
    <source>
        <strain>91001 / Biovar Mediaevalis</strain>
    </source>
</reference>
<gene>
    <name type="primary">cdh</name>
    <name type="ordered locus">YPO3986</name>
    <name type="ordered locus">y3843</name>
    <name type="ordered locus">YP_3349</name>
</gene>
<feature type="chain" id="PRO_0000198584" description="CDP-diacylglycerol pyrophosphatase">
    <location>
        <begin position="1"/>
        <end position="258"/>
    </location>
</feature>
<feature type="transmembrane region" description="Helical" evidence="2">
    <location>
        <begin position="10"/>
        <end position="30"/>
    </location>
</feature>
<comment type="catalytic activity">
    <reaction>
        <text>a CDP-1,2-diacyl-sn-glycerol + H2O = a 1,2-diacyl-sn-glycero-3-phosphate + CMP + 2 H(+)</text>
        <dbReference type="Rhea" id="RHEA:15221"/>
        <dbReference type="ChEBI" id="CHEBI:15377"/>
        <dbReference type="ChEBI" id="CHEBI:15378"/>
        <dbReference type="ChEBI" id="CHEBI:58332"/>
        <dbReference type="ChEBI" id="CHEBI:58608"/>
        <dbReference type="ChEBI" id="CHEBI:60377"/>
        <dbReference type="EC" id="3.6.1.26"/>
    </reaction>
</comment>
<comment type="pathway">
    <text>Phospholipid metabolism; CDP-diacylglycerol degradation; phosphatidate from CDP-diacylglycerol: step 1/1.</text>
</comment>
<comment type="subcellular location">
    <subcellularLocation>
        <location evidence="1">Cell inner membrane</location>
        <topology evidence="1">Single-pass membrane protein</topology>
    </subcellularLocation>
</comment>
<comment type="similarity">
    <text evidence="3">Belongs to the Cdh family.</text>
</comment>
<comment type="sequence caution" evidence="3">
    <conflict type="erroneous initiation">
        <sequence resource="EMBL-CDS" id="AAM87388"/>
    </conflict>
</comment>
<comment type="sequence caution" evidence="3">
    <conflict type="erroneous initiation">
        <sequence resource="EMBL-CDS" id="AAS63514"/>
    </conflict>
</comment>
<accession>Q8ZA34</accession>
<accession>Q0WA32</accession>